<proteinExistence type="inferred from homology"/>
<name>ENO_BACC7</name>
<accession>B7HW52</accession>
<evidence type="ECO:0000255" key="1">
    <source>
        <dbReference type="HAMAP-Rule" id="MF_00318"/>
    </source>
</evidence>
<reference key="1">
    <citation type="submission" date="2008-10" db="EMBL/GenBank/DDBJ databases">
        <title>Genome sequence of Bacillus cereus AH187.</title>
        <authorList>
            <person name="Dodson R.J."/>
            <person name="Durkin A.S."/>
            <person name="Rosovitz M.J."/>
            <person name="Rasko D.A."/>
            <person name="Kolsto A.B."/>
            <person name="Okstad O.A."/>
            <person name="Ravel J."/>
            <person name="Sutton G."/>
        </authorList>
    </citation>
    <scope>NUCLEOTIDE SEQUENCE [LARGE SCALE GENOMIC DNA]</scope>
    <source>
        <strain>AH187</strain>
    </source>
</reference>
<keyword id="KW-0963">Cytoplasm</keyword>
<keyword id="KW-0324">Glycolysis</keyword>
<keyword id="KW-0456">Lyase</keyword>
<keyword id="KW-0460">Magnesium</keyword>
<keyword id="KW-0479">Metal-binding</keyword>
<keyword id="KW-0964">Secreted</keyword>
<gene>
    <name evidence="1" type="primary">eno</name>
    <name type="ordered locus">BCAH187_A5284</name>
</gene>
<sequence length="431" mass="46400">MSTIIDVYAREVLDSRGNPTVEVEVYTESGAFGRAIVPSGASTGEHEAVELRDGDKSRYLGKGVVNAVNNVNEIIAPEIVGFDVTDQAGIDRAMIELDGTPNKGKLGANAILGVSMAVAHAAADFVGLPLYRYLGGFNAKQLPTPMMNIINGGSHADNNVDFQEFMILPVGAPTFKESIRMGAEVFHALKAVLHDKGLNTAVGDEGGFAPNLGSNREALEVIIEAIEKAGYKAGENVFLGMDVASSEFYNKETGKYDLAGEGRTGLTSAEMVDFYEELCKDFPIISIEDGLDENDWDGHKLLTERLGSKVQLVGDDLFVTNTQKLAEGIEKGISNSILIKVNQIGTLTETFEAIEMAKRAGYTAVVSHRSGETEDATIADIAVATNAGQIKTGSMSRTDRIAKYNQLLRIEDELGEIAVYDGIKSFYNIKR</sequence>
<organism>
    <name type="scientific">Bacillus cereus (strain AH187)</name>
    <dbReference type="NCBI Taxonomy" id="405534"/>
    <lineage>
        <taxon>Bacteria</taxon>
        <taxon>Bacillati</taxon>
        <taxon>Bacillota</taxon>
        <taxon>Bacilli</taxon>
        <taxon>Bacillales</taxon>
        <taxon>Bacillaceae</taxon>
        <taxon>Bacillus</taxon>
        <taxon>Bacillus cereus group</taxon>
    </lineage>
</organism>
<dbReference type="EC" id="4.2.1.11" evidence="1"/>
<dbReference type="EMBL" id="CP001177">
    <property type="protein sequence ID" value="ACJ79732.1"/>
    <property type="molecule type" value="Genomic_DNA"/>
</dbReference>
<dbReference type="SMR" id="B7HW52"/>
<dbReference type="KEGG" id="bcr:BCAH187_A5284"/>
<dbReference type="HOGENOM" id="CLU_031223_2_1_9"/>
<dbReference type="UniPathway" id="UPA00109">
    <property type="reaction ID" value="UER00187"/>
</dbReference>
<dbReference type="Proteomes" id="UP000002214">
    <property type="component" value="Chromosome"/>
</dbReference>
<dbReference type="GO" id="GO:0009986">
    <property type="term" value="C:cell surface"/>
    <property type="evidence" value="ECO:0007669"/>
    <property type="project" value="UniProtKB-SubCell"/>
</dbReference>
<dbReference type="GO" id="GO:0005576">
    <property type="term" value="C:extracellular region"/>
    <property type="evidence" value="ECO:0007669"/>
    <property type="project" value="UniProtKB-SubCell"/>
</dbReference>
<dbReference type="GO" id="GO:0000015">
    <property type="term" value="C:phosphopyruvate hydratase complex"/>
    <property type="evidence" value="ECO:0007669"/>
    <property type="project" value="InterPro"/>
</dbReference>
<dbReference type="GO" id="GO:0000287">
    <property type="term" value="F:magnesium ion binding"/>
    <property type="evidence" value="ECO:0007669"/>
    <property type="project" value="UniProtKB-UniRule"/>
</dbReference>
<dbReference type="GO" id="GO:0004634">
    <property type="term" value="F:phosphopyruvate hydratase activity"/>
    <property type="evidence" value="ECO:0007669"/>
    <property type="project" value="UniProtKB-UniRule"/>
</dbReference>
<dbReference type="GO" id="GO:0006096">
    <property type="term" value="P:glycolytic process"/>
    <property type="evidence" value="ECO:0007669"/>
    <property type="project" value="UniProtKB-UniRule"/>
</dbReference>
<dbReference type="CDD" id="cd03313">
    <property type="entry name" value="enolase"/>
    <property type="match status" value="1"/>
</dbReference>
<dbReference type="FunFam" id="3.20.20.120:FF:000001">
    <property type="entry name" value="Enolase"/>
    <property type="match status" value="1"/>
</dbReference>
<dbReference type="FunFam" id="3.30.390.10:FF:000001">
    <property type="entry name" value="Enolase"/>
    <property type="match status" value="1"/>
</dbReference>
<dbReference type="Gene3D" id="3.20.20.120">
    <property type="entry name" value="Enolase-like C-terminal domain"/>
    <property type="match status" value="1"/>
</dbReference>
<dbReference type="Gene3D" id="3.30.390.10">
    <property type="entry name" value="Enolase-like, N-terminal domain"/>
    <property type="match status" value="1"/>
</dbReference>
<dbReference type="HAMAP" id="MF_00318">
    <property type="entry name" value="Enolase"/>
    <property type="match status" value="1"/>
</dbReference>
<dbReference type="InterPro" id="IPR000941">
    <property type="entry name" value="Enolase"/>
</dbReference>
<dbReference type="InterPro" id="IPR036849">
    <property type="entry name" value="Enolase-like_C_sf"/>
</dbReference>
<dbReference type="InterPro" id="IPR029017">
    <property type="entry name" value="Enolase-like_N"/>
</dbReference>
<dbReference type="InterPro" id="IPR020810">
    <property type="entry name" value="Enolase_C"/>
</dbReference>
<dbReference type="InterPro" id="IPR020809">
    <property type="entry name" value="Enolase_CS"/>
</dbReference>
<dbReference type="InterPro" id="IPR020811">
    <property type="entry name" value="Enolase_N"/>
</dbReference>
<dbReference type="NCBIfam" id="TIGR01060">
    <property type="entry name" value="eno"/>
    <property type="match status" value="1"/>
</dbReference>
<dbReference type="PANTHER" id="PTHR11902">
    <property type="entry name" value="ENOLASE"/>
    <property type="match status" value="1"/>
</dbReference>
<dbReference type="PANTHER" id="PTHR11902:SF1">
    <property type="entry name" value="ENOLASE"/>
    <property type="match status" value="1"/>
</dbReference>
<dbReference type="Pfam" id="PF00113">
    <property type="entry name" value="Enolase_C"/>
    <property type="match status" value="1"/>
</dbReference>
<dbReference type="Pfam" id="PF03952">
    <property type="entry name" value="Enolase_N"/>
    <property type="match status" value="1"/>
</dbReference>
<dbReference type="PIRSF" id="PIRSF001400">
    <property type="entry name" value="Enolase"/>
    <property type="match status" value="1"/>
</dbReference>
<dbReference type="PRINTS" id="PR00148">
    <property type="entry name" value="ENOLASE"/>
</dbReference>
<dbReference type="SFLD" id="SFLDF00002">
    <property type="entry name" value="enolase"/>
    <property type="match status" value="1"/>
</dbReference>
<dbReference type="SFLD" id="SFLDG00178">
    <property type="entry name" value="enolase"/>
    <property type="match status" value="1"/>
</dbReference>
<dbReference type="SMART" id="SM01192">
    <property type="entry name" value="Enolase_C"/>
    <property type="match status" value="1"/>
</dbReference>
<dbReference type="SMART" id="SM01193">
    <property type="entry name" value="Enolase_N"/>
    <property type="match status" value="1"/>
</dbReference>
<dbReference type="SUPFAM" id="SSF51604">
    <property type="entry name" value="Enolase C-terminal domain-like"/>
    <property type="match status" value="1"/>
</dbReference>
<dbReference type="SUPFAM" id="SSF54826">
    <property type="entry name" value="Enolase N-terminal domain-like"/>
    <property type="match status" value="1"/>
</dbReference>
<dbReference type="PROSITE" id="PS00164">
    <property type="entry name" value="ENOLASE"/>
    <property type="match status" value="1"/>
</dbReference>
<comment type="function">
    <text evidence="1">Catalyzes the reversible conversion of 2-phosphoglycerate (2-PG) into phosphoenolpyruvate (PEP). It is essential for the degradation of carbohydrates via glycolysis.</text>
</comment>
<comment type="catalytic activity">
    <reaction evidence="1">
        <text>(2R)-2-phosphoglycerate = phosphoenolpyruvate + H2O</text>
        <dbReference type="Rhea" id="RHEA:10164"/>
        <dbReference type="ChEBI" id="CHEBI:15377"/>
        <dbReference type="ChEBI" id="CHEBI:58289"/>
        <dbReference type="ChEBI" id="CHEBI:58702"/>
        <dbReference type="EC" id="4.2.1.11"/>
    </reaction>
</comment>
<comment type="cofactor">
    <cofactor evidence="1">
        <name>Mg(2+)</name>
        <dbReference type="ChEBI" id="CHEBI:18420"/>
    </cofactor>
    <text evidence="1">Binds a second Mg(2+) ion via substrate during catalysis.</text>
</comment>
<comment type="pathway">
    <text evidence="1">Carbohydrate degradation; glycolysis; pyruvate from D-glyceraldehyde 3-phosphate: step 4/5.</text>
</comment>
<comment type="subcellular location">
    <subcellularLocation>
        <location evidence="1">Cytoplasm</location>
    </subcellularLocation>
    <subcellularLocation>
        <location evidence="1">Secreted</location>
    </subcellularLocation>
    <subcellularLocation>
        <location evidence="1">Cell surface</location>
    </subcellularLocation>
    <text evidence="1">Fractions of enolase are present in both the cytoplasm and on the cell surface.</text>
</comment>
<comment type="similarity">
    <text evidence="1">Belongs to the enolase family.</text>
</comment>
<protein>
    <recommendedName>
        <fullName evidence="1">Enolase</fullName>
        <ecNumber evidence="1">4.2.1.11</ecNumber>
    </recommendedName>
    <alternativeName>
        <fullName evidence="1">2-phospho-D-glycerate hydro-lyase</fullName>
    </alternativeName>
    <alternativeName>
        <fullName evidence="1">2-phosphoglycerate dehydratase</fullName>
    </alternativeName>
</protein>
<feature type="chain" id="PRO_1000119566" description="Enolase">
    <location>
        <begin position="1"/>
        <end position="431"/>
    </location>
</feature>
<feature type="active site" description="Proton donor" evidence="1">
    <location>
        <position position="205"/>
    </location>
</feature>
<feature type="active site" description="Proton acceptor" evidence="1">
    <location>
        <position position="340"/>
    </location>
</feature>
<feature type="binding site" evidence="1">
    <location>
        <position position="163"/>
    </location>
    <ligand>
        <name>(2R)-2-phosphoglycerate</name>
        <dbReference type="ChEBI" id="CHEBI:58289"/>
    </ligand>
</feature>
<feature type="binding site" evidence="1">
    <location>
        <position position="242"/>
    </location>
    <ligand>
        <name>Mg(2+)</name>
        <dbReference type="ChEBI" id="CHEBI:18420"/>
    </ligand>
</feature>
<feature type="binding site" evidence="1">
    <location>
        <position position="288"/>
    </location>
    <ligand>
        <name>Mg(2+)</name>
        <dbReference type="ChEBI" id="CHEBI:18420"/>
    </ligand>
</feature>
<feature type="binding site" evidence="1">
    <location>
        <position position="315"/>
    </location>
    <ligand>
        <name>Mg(2+)</name>
        <dbReference type="ChEBI" id="CHEBI:18420"/>
    </ligand>
</feature>
<feature type="binding site" evidence="1">
    <location>
        <position position="340"/>
    </location>
    <ligand>
        <name>(2R)-2-phosphoglycerate</name>
        <dbReference type="ChEBI" id="CHEBI:58289"/>
    </ligand>
</feature>
<feature type="binding site" evidence="1">
    <location>
        <position position="369"/>
    </location>
    <ligand>
        <name>(2R)-2-phosphoglycerate</name>
        <dbReference type="ChEBI" id="CHEBI:58289"/>
    </ligand>
</feature>
<feature type="binding site" evidence="1">
    <location>
        <position position="370"/>
    </location>
    <ligand>
        <name>(2R)-2-phosphoglycerate</name>
        <dbReference type="ChEBI" id="CHEBI:58289"/>
    </ligand>
</feature>
<feature type="binding site" evidence="1">
    <location>
        <position position="391"/>
    </location>
    <ligand>
        <name>(2R)-2-phosphoglycerate</name>
        <dbReference type="ChEBI" id="CHEBI:58289"/>
    </ligand>
</feature>